<proteinExistence type="inferred from homology"/>
<reference key="1">
    <citation type="journal article" date="2003" name="Nat. Biotechnol.">
        <title>The genome sequence of the entomopathogenic bacterium Photorhabdus luminescens.</title>
        <authorList>
            <person name="Duchaud E."/>
            <person name="Rusniok C."/>
            <person name="Frangeul L."/>
            <person name="Buchrieser C."/>
            <person name="Givaudan A."/>
            <person name="Taourit S."/>
            <person name="Bocs S."/>
            <person name="Boursaux-Eude C."/>
            <person name="Chandler M."/>
            <person name="Charles J.-F."/>
            <person name="Dassa E."/>
            <person name="Derose R."/>
            <person name="Derzelle S."/>
            <person name="Freyssinet G."/>
            <person name="Gaudriault S."/>
            <person name="Medigue C."/>
            <person name="Lanois A."/>
            <person name="Powell K."/>
            <person name="Siguier P."/>
            <person name="Vincent R."/>
            <person name="Wingate V."/>
            <person name="Zouine M."/>
            <person name="Glaser P."/>
            <person name="Boemare N."/>
            <person name="Danchin A."/>
            <person name="Kunst F."/>
        </authorList>
    </citation>
    <scope>NUCLEOTIDE SEQUENCE [LARGE SCALE GENOMIC DNA]</scope>
    <source>
        <strain>DSM 15139 / CIP 105565 / TT01</strain>
    </source>
</reference>
<protein>
    <recommendedName>
        <fullName evidence="1">Chromosome partition protein MukE</fullName>
    </recommendedName>
</protein>
<name>MUKE_PHOLL</name>
<accession>Q7N6B8</accession>
<sequence>MPVKLAQALANSLFPELDSQLRAGRHIGIDDLDNHAYLMDFQEQLEEFYARYNVELIRAPEGFFYLRPRSTTLIPRSVLSELDMMVGKILCYLYLSPERLANQGIFTAQELYEELISLADEGKLMKFVNQRSSGSDLDKQKLQEKVRTTLNRLRRLGMVYILPNDNNKFTITEAVFRFGADVRSGDDPREVQLRMIRDGEAMPIEGGLSLDDSENDETSDNSAEGTGDEQP</sequence>
<gene>
    <name evidence="1" type="primary">mukE</name>
    <name type="ordered locus">plu1638</name>
</gene>
<organism>
    <name type="scientific">Photorhabdus laumondii subsp. laumondii (strain DSM 15139 / CIP 105565 / TT01)</name>
    <name type="common">Photorhabdus luminescens subsp. laumondii</name>
    <dbReference type="NCBI Taxonomy" id="243265"/>
    <lineage>
        <taxon>Bacteria</taxon>
        <taxon>Pseudomonadati</taxon>
        <taxon>Pseudomonadota</taxon>
        <taxon>Gammaproteobacteria</taxon>
        <taxon>Enterobacterales</taxon>
        <taxon>Morganellaceae</taxon>
        <taxon>Photorhabdus</taxon>
    </lineage>
</organism>
<dbReference type="EMBL" id="BX571864">
    <property type="protein sequence ID" value="CAE13931.1"/>
    <property type="molecule type" value="Genomic_DNA"/>
</dbReference>
<dbReference type="SMR" id="Q7N6B8"/>
<dbReference type="STRING" id="243265.plu1638"/>
<dbReference type="KEGG" id="plu:plu1638"/>
<dbReference type="eggNOG" id="COG3095">
    <property type="taxonomic scope" value="Bacteria"/>
</dbReference>
<dbReference type="HOGENOM" id="CLU_1146408_0_0_6"/>
<dbReference type="Proteomes" id="UP000002514">
    <property type="component" value="Chromosome"/>
</dbReference>
<dbReference type="GO" id="GO:0005737">
    <property type="term" value="C:cytoplasm"/>
    <property type="evidence" value="ECO:0007669"/>
    <property type="project" value="UniProtKB-UniRule"/>
</dbReference>
<dbReference type="GO" id="GO:0009295">
    <property type="term" value="C:nucleoid"/>
    <property type="evidence" value="ECO:0007669"/>
    <property type="project" value="UniProtKB-SubCell"/>
</dbReference>
<dbReference type="GO" id="GO:0051301">
    <property type="term" value="P:cell division"/>
    <property type="evidence" value="ECO:0007669"/>
    <property type="project" value="UniProtKB-KW"/>
</dbReference>
<dbReference type="GO" id="GO:0030261">
    <property type="term" value="P:chromosome condensation"/>
    <property type="evidence" value="ECO:0007669"/>
    <property type="project" value="UniProtKB-KW"/>
</dbReference>
<dbReference type="GO" id="GO:0007059">
    <property type="term" value="P:chromosome segregation"/>
    <property type="evidence" value="ECO:0007669"/>
    <property type="project" value="UniProtKB-UniRule"/>
</dbReference>
<dbReference type="GO" id="GO:0006260">
    <property type="term" value="P:DNA replication"/>
    <property type="evidence" value="ECO:0007669"/>
    <property type="project" value="UniProtKB-UniRule"/>
</dbReference>
<dbReference type="Gene3D" id="1.10.10.2250">
    <property type="match status" value="1"/>
</dbReference>
<dbReference type="Gene3D" id="1.10.10.2260">
    <property type="entry name" value="MukE-like family, C-terminal domain"/>
    <property type="match status" value="1"/>
</dbReference>
<dbReference type="HAMAP" id="MF_01802">
    <property type="entry name" value="MukE"/>
    <property type="match status" value="1"/>
</dbReference>
<dbReference type="InterPro" id="IPR042037">
    <property type="entry name" value="MukE_C"/>
</dbReference>
<dbReference type="InterPro" id="IPR042038">
    <property type="entry name" value="MukE_N"/>
</dbReference>
<dbReference type="InterPro" id="IPR007385">
    <property type="entry name" value="Scp_MukE"/>
</dbReference>
<dbReference type="NCBIfam" id="NF003602">
    <property type="entry name" value="PRK05256.1"/>
    <property type="match status" value="1"/>
</dbReference>
<dbReference type="Pfam" id="PF04288">
    <property type="entry name" value="MukE"/>
    <property type="match status" value="1"/>
</dbReference>
<comment type="function">
    <text evidence="1">Involved in chromosome condensation, segregation and cell cycle progression. May participate in facilitating chromosome segregation by condensation DNA from both sides of a centrally located replisome during cell division. Probably acts via its interaction with MukB and MukF.</text>
</comment>
<comment type="subunit">
    <text evidence="1">Interacts, and probably forms a ternary complex, with MukF and MukB. The complex formation is stimulated by calcium or magnesium.</text>
</comment>
<comment type="subcellular location">
    <subcellularLocation>
        <location evidence="1">Cytoplasm</location>
        <location evidence="1">Nucleoid</location>
    </subcellularLocation>
    <text evidence="1">Restricted to the nucleoid region.</text>
</comment>
<comment type="similarity">
    <text evidence="1">Belongs to the MukE family.</text>
</comment>
<evidence type="ECO:0000255" key="1">
    <source>
        <dbReference type="HAMAP-Rule" id="MF_01802"/>
    </source>
</evidence>
<evidence type="ECO:0000256" key="2">
    <source>
        <dbReference type="SAM" id="MobiDB-lite"/>
    </source>
</evidence>
<keyword id="KW-0131">Cell cycle</keyword>
<keyword id="KW-0132">Cell division</keyword>
<keyword id="KW-0159">Chromosome partition</keyword>
<keyword id="KW-0963">Cytoplasm</keyword>
<keyword id="KW-0226">DNA condensation</keyword>
<keyword id="KW-1185">Reference proteome</keyword>
<feature type="chain" id="PRO_0000206799" description="Chromosome partition protein MukE">
    <location>
        <begin position="1"/>
        <end position="231"/>
    </location>
</feature>
<feature type="region of interest" description="Disordered" evidence="2">
    <location>
        <begin position="197"/>
        <end position="231"/>
    </location>
</feature>